<name>PAL4E_HUMAN</name>
<accession>A0A075B759</accession>
<evidence type="ECO:0000250" key="1"/>
<evidence type="ECO:0000250" key="2">
    <source>
        <dbReference type="UniProtKB" id="P62937"/>
    </source>
</evidence>
<evidence type="ECO:0000255" key="3">
    <source>
        <dbReference type="PROSITE-ProRule" id="PRU00156"/>
    </source>
</evidence>
<evidence type="ECO:0000305" key="4"/>
<evidence type="ECO:0000312" key="5">
    <source>
        <dbReference type="HGNC" id="HGNC:33997"/>
    </source>
</evidence>
<organism>
    <name type="scientific">Homo sapiens</name>
    <name type="common">Human</name>
    <dbReference type="NCBI Taxonomy" id="9606"/>
    <lineage>
        <taxon>Eukaryota</taxon>
        <taxon>Metazoa</taxon>
        <taxon>Chordata</taxon>
        <taxon>Craniata</taxon>
        <taxon>Vertebrata</taxon>
        <taxon>Euteleostomi</taxon>
        <taxon>Mammalia</taxon>
        <taxon>Eutheria</taxon>
        <taxon>Euarchontoglires</taxon>
        <taxon>Primates</taxon>
        <taxon>Haplorrhini</taxon>
        <taxon>Catarrhini</taxon>
        <taxon>Hominidae</taxon>
        <taxon>Homo</taxon>
    </lineage>
</organism>
<protein>
    <recommendedName>
        <fullName evidence="4">Peptidyl-prolyl cis-trans isomerase A-like 4E</fullName>
        <shortName>PPIase A-like 4E</shortName>
        <ecNumber>5.2.1.8</ecNumber>
    </recommendedName>
</protein>
<keyword id="KW-0963">Cytoplasm</keyword>
<keyword id="KW-0413">Isomerase</keyword>
<keyword id="KW-1185">Reference proteome</keyword>
<keyword id="KW-0697">Rotamase</keyword>
<comment type="function">
    <text evidence="1">PPIases accelerate the folding of proteins. It catalyzes the cis-trans isomerization of proline imidic peptide bonds in oligopeptides (By similarity).</text>
</comment>
<comment type="catalytic activity">
    <reaction>
        <text>[protein]-peptidylproline (omega=180) = [protein]-peptidylproline (omega=0)</text>
        <dbReference type="Rhea" id="RHEA:16237"/>
        <dbReference type="Rhea" id="RHEA-COMP:10747"/>
        <dbReference type="Rhea" id="RHEA-COMP:10748"/>
        <dbReference type="ChEBI" id="CHEBI:83833"/>
        <dbReference type="ChEBI" id="CHEBI:83834"/>
        <dbReference type="EC" id="5.2.1.8"/>
    </reaction>
</comment>
<comment type="subcellular location">
    <subcellularLocation>
        <location evidence="2">Cytoplasm</location>
    </subcellularLocation>
</comment>
<comment type="miscellaneous">
    <text evidence="4">It is one of six related genes or pseudogenes found in a cluster, thought to result from gene duplication, on chromosome 1.</text>
</comment>
<comment type="similarity">
    <text evidence="4">Belongs to the cyclophilin-type PPIase family. PPIase A subfamily.</text>
</comment>
<reference key="1">
    <citation type="journal article" date="2006" name="Nature">
        <title>The DNA sequence and biological annotation of human chromosome 1.</title>
        <authorList>
            <person name="Gregory S.G."/>
            <person name="Barlow K.F."/>
            <person name="McLay K.E."/>
            <person name="Kaul R."/>
            <person name="Swarbreck D."/>
            <person name="Dunham A."/>
            <person name="Scott C.E."/>
            <person name="Howe K.L."/>
            <person name="Woodfine K."/>
            <person name="Spencer C.C.A."/>
            <person name="Jones M.C."/>
            <person name="Gillson C."/>
            <person name="Searle S."/>
            <person name="Zhou Y."/>
            <person name="Kokocinski F."/>
            <person name="McDonald L."/>
            <person name="Evans R."/>
            <person name="Phillips K."/>
            <person name="Atkinson A."/>
            <person name="Cooper R."/>
            <person name="Jones C."/>
            <person name="Hall R.E."/>
            <person name="Andrews T.D."/>
            <person name="Lloyd C."/>
            <person name="Ainscough R."/>
            <person name="Almeida J.P."/>
            <person name="Ambrose K.D."/>
            <person name="Anderson F."/>
            <person name="Andrew R.W."/>
            <person name="Ashwell R.I.S."/>
            <person name="Aubin K."/>
            <person name="Babbage A.K."/>
            <person name="Bagguley C.L."/>
            <person name="Bailey J."/>
            <person name="Beasley H."/>
            <person name="Bethel G."/>
            <person name="Bird C.P."/>
            <person name="Bray-Allen S."/>
            <person name="Brown J.Y."/>
            <person name="Brown A.J."/>
            <person name="Buckley D."/>
            <person name="Burton J."/>
            <person name="Bye J."/>
            <person name="Carder C."/>
            <person name="Chapman J.C."/>
            <person name="Clark S.Y."/>
            <person name="Clarke G."/>
            <person name="Clee C."/>
            <person name="Cobley V."/>
            <person name="Collier R.E."/>
            <person name="Corby N."/>
            <person name="Coville G.J."/>
            <person name="Davies J."/>
            <person name="Deadman R."/>
            <person name="Dunn M."/>
            <person name="Earthrowl M."/>
            <person name="Ellington A.G."/>
            <person name="Errington H."/>
            <person name="Frankish A."/>
            <person name="Frankland J."/>
            <person name="French L."/>
            <person name="Garner P."/>
            <person name="Garnett J."/>
            <person name="Gay L."/>
            <person name="Ghori M.R.J."/>
            <person name="Gibson R."/>
            <person name="Gilby L.M."/>
            <person name="Gillett W."/>
            <person name="Glithero R.J."/>
            <person name="Grafham D.V."/>
            <person name="Griffiths C."/>
            <person name="Griffiths-Jones S."/>
            <person name="Grocock R."/>
            <person name="Hammond S."/>
            <person name="Harrison E.S.I."/>
            <person name="Hart E."/>
            <person name="Haugen E."/>
            <person name="Heath P.D."/>
            <person name="Holmes S."/>
            <person name="Holt K."/>
            <person name="Howden P.J."/>
            <person name="Hunt A.R."/>
            <person name="Hunt S.E."/>
            <person name="Hunter G."/>
            <person name="Isherwood J."/>
            <person name="James R."/>
            <person name="Johnson C."/>
            <person name="Johnson D."/>
            <person name="Joy A."/>
            <person name="Kay M."/>
            <person name="Kershaw J.K."/>
            <person name="Kibukawa M."/>
            <person name="Kimberley A.M."/>
            <person name="King A."/>
            <person name="Knights A.J."/>
            <person name="Lad H."/>
            <person name="Laird G."/>
            <person name="Lawlor S."/>
            <person name="Leongamornlert D.A."/>
            <person name="Lloyd D.M."/>
            <person name="Loveland J."/>
            <person name="Lovell J."/>
            <person name="Lush M.J."/>
            <person name="Lyne R."/>
            <person name="Martin S."/>
            <person name="Mashreghi-Mohammadi M."/>
            <person name="Matthews L."/>
            <person name="Matthews N.S.W."/>
            <person name="McLaren S."/>
            <person name="Milne S."/>
            <person name="Mistry S."/>
            <person name="Moore M.J.F."/>
            <person name="Nickerson T."/>
            <person name="O'Dell C.N."/>
            <person name="Oliver K."/>
            <person name="Palmeiri A."/>
            <person name="Palmer S.A."/>
            <person name="Parker A."/>
            <person name="Patel D."/>
            <person name="Pearce A.V."/>
            <person name="Peck A.I."/>
            <person name="Pelan S."/>
            <person name="Phelps K."/>
            <person name="Phillimore B.J."/>
            <person name="Plumb R."/>
            <person name="Rajan J."/>
            <person name="Raymond C."/>
            <person name="Rouse G."/>
            <person name="Saenphimmachak C."/>
            <person name="Sehra H.K."/>
            <person name="Sheridan E."/>
            <person name="Shownkeen R."/>
            <person name="Sims S."/>
            <person name="Skuce C.D."/>
            <person name="Smith M."/>
            <person name="Steward C."/>
            <person name="Subramanian S."/>
            <person name="Sycamore N."/>
            <person name="Tracey A."/>
            <person name="Tromans A."/>
            <person name="Van Helmond Z."/>
            <person name="Wall M."/>
            <person name="Wallis J.M."/>
            <person name="White S."/>
            <person name="Whitehead S.L."/>
            <person name="Wilkinson J.E."/>
            <person name="Willey D.L."/>
            <person name="Williams H."/>
            <person name="Wilming L."/>
            <person name="Wray P.W."/>
            <person name="Wu Z."/>
            <person name="Coulson A."/>
            <person name="Vaudin M."/>
            <person name="Sulston J.E."/>
            <person name="Durbin R.M."/>
            <person name="Hubbard T."/>
            <person name="Wooster R."/>
            <person name="Dunham I."/>
            <person name="Carter N.P."/>
            <person name="McVean G."/>
            <person name="Ross M.T."/>
            <person name="Harrow J."/>
            <person name="Olson M.V."/>
            <person name="Beck S."/>
            <person name="Rogers J."/>
            <person name="Bentley D.R."/>
        </authorList>
    </citation>
    <scope>NUCLEOTIDE SEQUENCE [LARGE SCALE GENOMIC DNA]</scope>
</reference>
<gene>
    <name evidence="5" type="primary">PPIAL4E</name>
</gene>
<dbReference type="EC" id="5.2.1.8"/>
<dbReference type="EMBL" id="AC246785">
    <property type="status" value="NOT_ANNOTATED_CDS"/>
    <property type="molecule type" value="Genomic_DNA"/>
</dbReference>
<dbReference type="CCDS" id="CCDS76201.1"/>
<dbReference type="RefSeq" id="NP_001137504.2">
    <property type="nucleotide sequence ID" value="NM_001144032.3"/>
</dbReference>
<dbReference type="SMR" id="A0A075B759"/>
<dbReference type="FunCoup" id="A0A075B759">
    <property type="interactions" value="179"/>
</dbReference>
<dbReference type="STRING" id="9606.ENSP00000463419"/>
<dbReference type="GlyGen" id="A0A075B759">
    <property type="glycosylation" value="1 site, 1 O-linked glycan (1 site)"/>
</dbReference>
<dbReference type="iPTMnet" id="A0A075B759"/>
<dbReference type="PhosphoSitePlus" id="A0A075B759"/>
<dbReference type="BioMuta" id="PPIAL4E"/>
<dbReference type="jPOST" id="A0A075B759"/>
<dbReference type="MassIVE" id="A0A075B759"/>
<dbReference type="PaxDb" id="9606-ENSP00000463419"/>
<dbReference type="DNASU" id="730262"/>
<dbReference type="Ensembl" id="ENST00000581164.2">
    <property type="protein sequence ID" value="ENSP00000463419.1"/>
    <property type="gene ID" value="ENSG00000271567.2"/>
</dbReference>
<dbReference type="GeneID" id="730262"/>
<dbReference type="KEGG" id="hsa:728945"/>
<dbReference type="KEGG" id="hsa:730262"/>
<dbReference type="MANE-Select" id="ENST00000581164.2">
    <property type="protein sequence ID" value="ENSP00000463419.1"/>
    <property type="RefSeq nucleotide sequence ID" value="NM_001144032.3"/>
    <property type="RefSeq protein sequence ID" value="NP_001137504.2"/>
</dbReference>
<dbReference type="UCSC" id="uc010paz.2">
    <property type="organism name" value="human"/>
</dbReference>
<dbReference type="AGR" id="HGNC:33997"/>
<dbReference type="AGR" id="HGNC:33999"/>
<dbReference type="CTD" id="728945"/>
<dbReference type="CTD" id="730262"/>
<dbReference type="DisGeNET" id="730262"/>
<dbReference type="GeneCards" id="PPIAL4E"/>
<dbReference type="HGNC" id="HGNC:33997">
    <property type="gene designation" value="PPIAL4E"/>
</dbReference>
<dbReference type="HPA" id="ENSG00000271567">
    <property type="expression patterns" value="Tissue enriched (brain)"/>
</dbReference>
<dbReference type="neXtProt" id="NX_A0A075B759"/>
<dbReference type="VEuPathDB" id="HostDB:ENSG00000271567"/>
<dbReference type="eggNOG" id="KOG0865">
    <property type="taxonomic scope" value="Eukaryota"/>
</dbReference>
<dbReference type="HOGENOM" id="CLU_012062_4_3_1"/>
<dbReference type="InParanoid" id="A0A075B759"/>
<dbReference type="OrthoDB" id="9458476at2759"/>
<dbReference type="PAN-GO" id="A0A075B759">
    <property type="GO annotations" value="6 GO annotations based on evolutionary models"/>
</dbReference>
<dbReference type="PhylomeDB" id="A0A075B759"/>
<dbReference type="PathwayCommons" id="A0A075B759"/>
<dbReference type="BioGRID-ORCS" id="728945">
    <property type="hits" value="32 hits in 221 CRISPR screens"/>
</dbReference>
<dbReference type="BioGRID-ORCS" id="730262">
    <property type="hits" value="27 hits in 200 CRISPR screens"/>
</dbReference>
<dbReference type="Pharos" id="A0A075B759">
    <property type="development level" value="Tdark"/>
</dbReference>
<dbReference type="PRO" id="PR:A0A075B759"/>
<dbReference type="Proteomes" id="UP000005640">
    <property type="component" value="Chromosome 1"/>
</dbReference>
<dbReference type="RNAct" id="A0A075B759">
    <property type="molecule type" value="protein"/>
</dbReference>
<dbReference type="Bgee" id="ENSG00000271567">
    <property type="expression patterns" value="Expressed in granulocyte and 70 other cell types or tissues"/>
</dbReference>
<dbReference type="GO" id="GO:0005737">
    <property type="term" value="C:cytoplasm"/>
    <property type="evidence" value="ECO:0000318"/>
    <property type="project" value="GO_Central"/>
</dbReference>
<dbReference type="GO" id="GO:0016018">
    <property type="term" value="F:cyclosporin A binding"/>
    <property type="evidence" value="ECO:0000318"/>
    <property type="project" value="GO_Central"/>
</dbReference>
<dbReference type="GO" id="GO:0003755">
    <property type="term" value="F:peptidyl-prolyl cis-trans isomerase activity"/>
    <property type="evidence" value="ECO:0000318"/>
    <property type="project" value="GO_Central"/>
</dbReference>
<dbReference type="GO" id="GO:0006457">
    <property type="term" value="P:protein folding"/>
    <property type="evidence" value="ECO:0000318"/>
    <property type="project" value="GO_Central"/>
</dbReference>
<dbReference type="FunFam" id="2.40.100.10:FF:000011">
    <property type="entry name" value="Peptidyl-prolyl cis-trans isomerase A"/>
    <property type="match status" value="1"/>
</dbReference>
<dbReference type="Gene3D" id="2.40.100.10">
    <property type="entry name" value="Cyclophilin-like"/>
    <property type="match status" value="1"/>
</dbReference>
<dbReference type="InterPro" id="IPR029000">
    <property type="entry name" value="Cyclophilin-like_dom_sf"/>
</dbReference>
<dbReference type="InterPro" id="IPR024936">
    <property type="entry name" value="Cyclophilin-type_PPIase"/>
</dbReference>
<dbReference type="InterPro" id="IPR020892">
    <property type="entry name" value="Cyclophilin-type_PPIase_CS"/>
</dbReference>
<dbReference type="InterPro" id="IPR002130">
    <property type="entry name" value="Cyclophilin-type_PPIase_dom"/>
</dbReference>
<dbReference type="PANTHER" id="PTHR11071">
    <property type="entry name" value="PEPTIDYL-PROLYL CIS-TRANS ISOMERASE"/>
    <property type="match status" value="1"/>
</dbReference>
<dbReference type="PANTHER" id="PTHR11071:SF466">
    <property type="entry name" value="PEPTIDYL-PROLYL CIS-TRANS ISOMERASE A-LIKE 4C-RELATED"/>
    <property type="match status" value="1"/>
</dbReference>
<dbReference type="Pfam" id="PF00160">
    <property type="entry name" value="Pro_isomerase"/>
    <property type="match status" value="1"/>
</dbReference>
<dbReference type="PIRSF" id="PIRSF001467">
    <property type="entry name" value="Peptidylpro_ismrse"/>
    <property type="match status" value="1"/>
</dbReference>
<dbReference type="PRINTS" id="PR00153">
    <property type="entry name" value="CSAPPISMRASE"/>
</dbReference>
<dbReference type="SUPFAM" id="SSF50891">
    <property type="entry name" value="Cyclophilin-like"/>
    <property type="match status" value="1"/>
</dbReference>
<dbReference type="PROSITE" id="PS00170">
    <property type="entry name" value="CSA_PPIASE_1"/>
    <property type="match status" value="1"/>
</dbReference>
<dbReference type="PROSITE" id="PS50072">
    <property type="entry name" value="CSA_PPIASE_2"/>
    <property type="match status" value="1"/>
</dbReference>
<feature type="chain" id="PRO_0000433925" description="Peptidyl-prolyl cis-trans isomerase A-like 4E">
    <location>
        <begin position="1"/>
        <end position="164"/>
    </location>
</feature>
<feature type="domain" description="PPIase cyclophilin-type" evidence="3">
    <location>
        <begin position="7"/>
        <end position="163"/>
    </location>
</feature>
<sequence length="164" mass="18197">MVNSVVFFEITRDGKPLGRISIKLFADKIPKTAENFRALSTGEKGFRYKGSCFHRIIPGFMCQGGDFTRPNGTGDKSIYGEKFDDENLIRKHTGSGILSMANAGPNTNGSQFFICAAKTEWLDGKHVAFGKVKERVNIVEAMEHFGYRNSKTSKKITIADCGQF</sequence>
<proteinExistence type="inferred from homology"/>